<organism>
    <name type="scientific">Escherichia coli O81 (strain ED1a)</name>
    <dbReference type="NCBI Taxonomy" id="585397"/>
    <lineage>
        <taxon>Bacteria</taxon>
        <taxon>Pseudomonadati</taxon>
        <taxon>Pseudomonadota</taxon>
        <taxon>Gammaproteobacteria</taxon>
        <taxon>Enterobacterales</taxon>
        <taxon>Enterobacteriaceae</taxon>
        <taxon>Escherichia</taxon>
    </lineage>
</organism>
<reference key="1">
    <citation type="journal article" date="2009" name="PLoS Genet.">
        <title>Organised genome dynamics in the Escherichia coli species results in highly diverse adaptive paths.</title>
        <authorList>
            <person name="Touchon M."/>
            <person name="Hoede C."/>
            <person name="Tenaillon O."/>
            <person name="Barbe V."/>
            <person name="Baeriswyl S."/>
            <person name="Bidet P."/>
            <person name="Bingen E."/>
            <person name="Bonacorsi S."/>
            <person name="Bouchier C."/>
            <person name="Bouvet O."/>
            <person name="Calteau A."/>
            <person name="Chiapello H."/>
            <person name="Clermont O."/>
            <person name="Cruveiller S."/>
            <person name="Danchin A."/>
            <person name="Diard M."/>
            <person name="Dossat C."/>
            <person name="Karoui M.E."/>
            <person name="Frapy E."/>
            <person name="Garry L."/>
            <person name="Ghigo J.M."/>
            <person name="Gilles A.M."/>
            <person name="Johnson J."/>
            <person name="Le Bouguenec C."/>
            <person name="Lescat M."/>
            <person name="Mangenot S."/>
            <person name="Martinez-Jehanne V."/>
            <person name="Matic I."/>
            <person name="Nassif X."/>
            <person name="Oztas S."/>
            <person name="Petit M.A."/>
            <person name="Pichon C."/>
            <person name="Rouy Z."/>
            <person name="Ruf C.S."/>
            <person name="Schneider D."/>
            <person name="Tourret J."/>
            <person name="Vacherie B."/>
            <person name="Vallenet D."/>
            <person name="Medigue C."/>
            <person name="Rocha E.P.C."/>
            <person name="Denamur E."/>
        </authorList>
    </citation>
    <scope>NUCLEOTIDE SEQUENCE [LARGE SCALE GENOMIC DNA]</scope>
    <source>
        <strain>ED1a</strain>
    </source>
</reference>
<evidence type="ECO:0000255" key="1">
    <source>
        <dbReference type="HAMAP-Rule" id="MF_01198"/>
    </source>
</evidence>
<accession>B7MPE3</accession>
<name>IRAP_ECO81</name>
<keyword id="KW-0175">Coiled coil</keyword>
<keyword id="KW-0963">Cytoplasm</keyword>
<keyword id="KW-0346">Stress response</keyword>
<sequence length="86" mass="9965">MKNLIAELLFKLAQKEEESKELCAQVEALEIIVTAMLRNMAQNDQQRLIDQVEGALYEVKPDASIPDDDTELLRDYVKKLLRHPRQ</sequence>
<protein>
    <recommendedName>
        <fullName evidence="1">Anti-adapter protein IraP</fullName>
    </recommendedName>
</protein>
<comment type="function">
    <text evidence="1">Inhibits RpoS proteolysis by regulating RssB activity, thereby increasing the stability of the sigma stress factor RpoS especially during phosphate starvation, but also in stationary phase and during nitrogen starvation. Its effect on RpoS stability is due to its interaction with RssB, which probably blocks the interaction of RssB with RpoS, and the consequent delivery of the RssB-RpoS complex to the ClpXP protein degradation pathway.</text>
</comment>
<comment type="subunit">
    <text evidence="1">Interacts with RssB.</text>
</comment>
<comment type="subcellular location">
    <subcellularLocation>
        <location evidence="1">Cytoplasm</location>
    </subcellularLocation>
</comment>
<comment type="similarity">
    <text evidence="1">Belongs to the IraP family.</text>
</comment>
<gene>
    <name evidence="1" type="primary">iraP</name>
    <name type="ordered locus">ECED1_0405</name>
</gene>
<feature type="chain" id="PRO_1000164551" description="Anti-adapter protein IraP">
    <location>
        <begin position="1"/>
        <end position="86"/>
    </location>
</feature>
<feature type="coiled-coil region" evidence="1">
    <location>
        <begin position="1"/>
        <end position="36"/>
    </location>
</feature>
<dbReference type="EMBL" id="CU928162">
    <property type="protein sequence ID" value="CAR06615.1"/>
    <property type="molecule type" value="Genomic_DNA"/>
</dbReference>
<dbReference type="RefSeq" id="WP_000792973.1">
    <property type="nucleotide sequence ID" value="NC_011745.1"/>
</dbReference>
<dbReference type="SMR" id="B7MPE3"/>
<dbReference type="KEGG" id="ecq:ECED1_0405"/>
<dbReference type="HOGENOM" id="CLU_169517_0_0_6"/>
<dbReference type="Proteomes" id="UP000000748">
    <property type="component" value="Chromosome"/>
</dbReference>
<dbReference type="GO" id="GO:0005737">
    <property type="term" value="C:cytoplasm"/>
    <property type="evidence" value="ECO:0007669"/>
    <property type="project" value="UniProtKB-SubCell"/>
</dbReference>
<dbReference type="GO" id="GO:0009267">
    <property type="term" value="P:cellular response to starvation"/>
    <property type="evidence" value="ECO:0007669"/>
    <property type="project" value="UniProtKB-UniRule"/>
</dbReference>
<dbReference type="HAMAP" id="MF_01198">
    <property type="entry name" value="Anti_adapt_IraP"/>
    <property type="match status" value="1"/>
</dbReference>
<dbReference type="InterPro" id="IPR019732">
    <property type="entry name" value="SigmaS_Anti-adapt_IraP"/>
</dbReference>
<dbReference type="NCBIfam" id="NF007598">
    <property type="entry name" value="PRK10244.1"/>
    <property type="match status" value="1"/>
</dbReference>
<dbReference type="Pfam" id="PF10796">
    <property type="entry name" value="Anti-adapt_IraP"/>
    <property type="match status" value="1"/>
</dbReference>
<proteinExistence type="inferred from homology"/>